<comment type="function">
    <text evidence="6 7 9 10">Involved in synaptic vesicle (SV) recycling in neurons probably by regulating clathrin-mediated endocytosis (PubMed:14622579, PubMed:21029864). By controlling SV endocytosis, regulates the rate of excitatory postsynaptic currents (EPSCs) at neuromuscular junctions and thus locomotion (PubMed:21029864). In a similar manner, involved in necrotic neuronal cell death induced by abnormal hyperactivation of ion channels (PubMed:22157748). Plays a minor role in responses to mechanical stimuli (PubMed:17928447). Plays a minor role in unc-26/synaptojanin localization to synapses (PubMed:14622579).</text>
</comment>
<comment type="subunit">
    <text evidence="11">May form a homodimer (via the BAR domain).</text>
</comment>
<comment type="subcellular location">
    <subcellularLocation>
        <location evidence="6 8 9">Synapse</location>
    </subcellularLocation>
    <subcellularLocation>
        <location evidence="6 9">Cytoplasmic vesicle</location>
        <location evidence="6 9">Secretory vesicle</location>
        <location evidence="6 9">Synaptic vesicle</location>
    </subcellularLocation>
    <subcellularLocation>
        <location evidence="14">Membrane</location>
        <topology evidence="14">Peripheral membrane protein</topology>
    </subcellularLocation>
    <text evidence="6 9">Localizes to neuromuscular junctions. Co-localizes with snb-1/synaptobrevin and rab-3 but not dyn-1 and apt-4 (PubMed:14622579, PubMed:21029864). Exocytosis promotes dissociation from synaptic vesicles (PubMed:21029864).</text>
</comment>
<comment type="alternative products">
    <event type="alternative splicing"/>
    <isoform>
        <id>B1V8A0-1</id>
        <name evidence="20">d</name>
        <sequence type="displayed"/>
    </isoform>
    <isoform>
        <id>B1V8A0-2</id>
        <name evidence="17">a</name>
        <sequence type="described" ref="VSP_058674 VSP_058675"/>
    </isoform>
    <isoform>
        <id>B1V8A0-3</id>
        <name evidence="18">b</name>
        <sequence type="described" ref="VSP_058673 VSP_058675"/>
    </isoform>
    <isoform>
        <id>B1V8A0-4</id>
        <name evidence="19">c</name>
        <sequence type="described" ref="VSP_058675"/>
    </isoform>
</comment>
<comment type="tissue specificity">
    <text evidence="6">Expressed in neurons and posterior intestine.</text>
</comment>
<comment type="domain">
    <text evidence="1 9">An N-terminal amphipathic helix, the BAR domain and a second amphipathic helix inserted into helix 1 of the BAR domain (N-BAR domain) induce membrane curvature and bind curved membranes. The BAR domain dimer forms a rigid crescent shaped bundle of helices with the pair of second amphipathic helices protruding towards the membrane-binding surface (By similarity). Essential for synaptic vesicle endocytosis (PubMed:21029864). Plays a role in unc-57 localization to synaptic vesicles (PubMed:21029864). Dimerization and membrane-bending activity are required neither for binding to synaptic vesicles nor for unbinding following synaptic vesicle exocytosis (PubMed:21029864).</text>
</comment>
<comment type="domain">
    <text evidence="9">The SH3 domain is required for unc-26/synaptojanin localization to synapses but is dispensable for endocytosis and unc-57 targeting to synaptic vesicles.</text>
</comment>
<comment type="similarity">
    <text evidence="12">Belongs to the endophilin family.</text>
</comment>
<name>SH3GH_CAEEL</name>
<keyword id="KW-0025">Alternative splicing</keyword>
<keyword id="KW-0175">Coiled coil</keyword>
<keyword id="KW-0968">Cytoplasmic vesicle</keyword>
<keyword id="KW-0254">Endocytosis</keyword>
<keyword id="KW-0472">Membrane</keyword>
<keyword id="KW-1210">Necrosis</keyword>
<keyword id="KW-1185">Reference proteome</keyword>
<keyword id="KW-0728">SH3 domain</keyword>
<keyword id="KW-0770">Synapse</keyword>
<protein>
    <recommendedName>
        <fullName evidence="13">Endophilin-A homolog</fullName>
    </recommendedName>
    <alternativeName>
        <fullName evidence="13">Endophilin-1 homolog</fullName>
    </alternativeName>
    <alternativeName>
        <fullName evidence="20">Uncoordinated protein 57</fullName>
    </alternativeName>
</protein>
<evidence type="ECO:0000250" key="1">
    <source>
        <dbReference type="UniProtKB" id="Q99962"/>
    </source>
</evidence>
<evidence type="ECO:0000255" key="2"/>
<evidence type="ECO:0000255" key="3">
    <source>
        <dbReference type="PROSITE-ProRule" id="PRU00192"/>
    </source>
</evidence>
<evidence type="ECO:0000255" key="4">
    <source>
        <dbReference type="PROSITE-ProRule" id="PRU00361"/>
    </source>
</evidence>
<evidence type="ECO:0000256" key="5">
    <source>
        <dbReference type="SAM" id="MobiDB-lite"/>
    </source>
</evidence>
<evidence type="ECO:0000269" key="6">
    <source>
    </source>
</evidence>
<evidence type="ECO:0000269" key="7">
    <source>
    </source>
</evidence>
<evidence type="ECO:0000269" key="8">
    <source>
    </source>
</evidence>
<evidence type="ECO:0000269" key="9">
    <source>
    </source>
</evidence>
<evidence type="ECO:0000269" key="10">
    <source>
    </source>
</evidence>
<evidence type="ECO:0000303" key="11">
    <source>
    </source>
</evidence>
<evidence type="ECO:0000305" key="12"/>
<evidence type="ECO:0000305" key="13">
    <source>
    </source>
</evidence>
<evidence type="ECO:0000305" key="14">
    <source>
    </source>
</evidence>
<evidence type="ECO:0000312" key="15">
    <source>
        <dbReference type="EMBL" id="AAQ96373.1"/>
    </source>
</evidence>
<evidence type="ECO:0000312" key="16">
    <source>
        <dbReference type="Proteomes" id="UP000001940"/>
    </source>
</evidence>
<evidence type="ECO:0000312" key="17">
    <source>
        <dbReference type="WormBase" id="T04D1.3a"/>
    </source>
</evidence>
<evidence type="ECO:0000312" key="18">
    <source>
        <dbReference type="WormBase" id="T04D1.3b"/>
    </source>
</evidence>
<evidence type="ECO:0000312" key="19">
    <source>
        <dbReference type="WormBase" id="T04D1.3c"/>
    </source>
</evidence>
<evidence type="ECO:0000312" key="20">
    <source>
        <dbReference type="WormBase" id="T04D1.3d"/>
    </source>
</evidence>
<organism evidence="16">
    <name type="scientific">Caenorhabditis elegans</name>
    <dbReference type="NCBI Taxonomy" id="6239"/>
    <lineage>
        <taxon>Eukaryota</taxon>
        <taxon>Metazoa</taxon>
        <taxon>Ecdysozoa</taxon>
        <taxon>Nematoda</taxon>
        <taxon>Chromadorea</taxon>
        <taxon>Rhabditida</taxon>
        <taxon>Rhabditina</taxon>
        <taxon>Rhabditomorpha</taxon>
        <taxon>Rhabditoidea</taxon>
        <taxon>Rhabditidae</taxon>
        <taxon>Peloderinae</taxon>
        <taxon>Caenorhabditis</taxon>
    </lineage>
</organism>
<sequence length="381" mass="42856">MSLSGLRKQFNKANQYLSETMGAAEPTKLDDVFNEMEKNVDTTYNLITDLVAGTNEYLQPNPATRAKMATQVALSKVRGTTKTSPYPQTEGMLADVMQKYGQQLGDNSDLGKSLNDAAETYRQMADIKYQMEDNVKQNFLDPLTHLQNNELKDVNHHRTKLKGRRLDYDCKKRQQRRDDEMIQAEEKLEESKRLAEMSMFNVLSNDVEQISQLRALIEAQLDFHRQTAQCLENLQQQLGHRIKDAAARPREEHVPLSVLANESRTPRSSFRSPAPSDMSHNSTAAAAFKMPPQNGGGITQAPPSYQGPPPGGLPPPLSQQQKPQCRALFDFDAQSEGELDFKEGTLIELVSQIDENWYEGRVNGKTGLFPVTYVQVLVPLK</sequence>
<reference evidence="15" key="1">
    <citation type="journal article" date="2003" name="Neuron">
        <title>Endophilin is required for synaptic vesicle endocytosis by localizing synaptojanin.</title>
        <authorList>
            <person name="Schuske K.R."/>
            <person name="Richmond J.E."/>
            <person name="Matthies D.S."/>
            <person name="Davis W.S."/>
            <person name="Runz S."/>
            <person name="Rube D.A."/>
            <person name="van der Bliek A.M."/>
            <person name="Jorgensen E.M."/>
        </authorList>
    </citation>
    <scope>NUCLEOTIDE SEQUENCE [MRNA] (ISOFORM A)</scope>
    <scope>FUNCTION</scope>
    <scope>SUBCELLULAR LOCATION</scope>
    <scope>TISSUE SPECIFICITY</scope>
</reference>
<reference evidence="16" key="2">
    <citation type="journal article" date="1998" name="Science">
        <title>Genome sequence of the nematode C. elegans: a platform for investigating biology.</title>
        <authorList>
            <consortium name="The C. elegans sequencing consortium"/>
        </authorList>
    </citation>
    <scope>NUCLEOTIDE SEQUENCE [LARGE SCALE GENOMIC DNA]</scope>
    <source>
        <strain evidence="16">Bristol N2</strain>
    </source>
</reference>
<reference evidence="12" key="3">
    <citation type="journal article" date="2007" name="J. Neurosci.">
        <title>Huntingtin-interacting protein 1 influences worm and mouse presynaptic function and protects Caenorhabditis elegans neurons against mutant polyglutamine toxicity.</title>
        <authorList>
            <person name="Parker J.A."/>
            <person name="Metzler M."/>
            <person name="Georgiou J."/>
            <person name="Mage M."/>
            <person name="Roder J.C."/>
            <person name="Rose A.M."/>
            <person name="Hayden M.R."/>
            <person name="Neri C."/>
        </authorList>
    </citation>
    <scope>FUNCTION</scope>
</reference>
<reference evidence="12" key="4">
    <citation type="journal article" date="2008" name="Mol. Biol. Cell">
        <title>Polyunsaturated fatty acids influence synaptojanin localization to regulate synaptic vesicle recycling.</title>
        <authorList>
            <person name="Marza E."/>
            <person name="Long T."/>
            <person name="Saiardi A."/>
            <person name="Sumakovic M."/>
            <person name="Eimer S."/>
            <person name="Hall D.H."/>
            <person name="Lesa G.M."/>
        </authorList>
    </citation>
    <scope>SUBCELLULAR LOCATION</scope>
</reference>
<reference evidence="12" key="5">
    <citation type="journal article" date="2010" name="Cell">
        <title>Endophilin functions as a membrane-bending molecule and is delivered to endocytic zones by exocytosis.</title>
        <authorList>
            <person name="Bai J."/>
            <person name="Hu Z."/>
            <person name="Dittman J.S."/>
            <person name="Pym E.C."/>
            <person name="Kaplan J.M."/>
        </authorList>
    </citation>
    <scope>FUNCTION</scope>
    <scope>SUBCELLULAR LOCATION</scope>
    <scope>DOMAIN</scope>
    <scope>MUTAGENESIS OF 1-MET--PRO-26 AND ALA-66</scope>
</reference>
<reference evidence="12" key="6">
    <citation type="journal article" date="2012" name="EMBO J.">
        <title>Endocytosis and intracellular trafficking contribute to necrotic neurodegeneration in C. elegans.</title>
        <authorList>
            <person name="Troulinaki K."/>
            <person name="Tavernarakis N."/>
        </authorList>
    </citation>
    <scope>FUNCTION</scope>
</reference>
<accession>B1V8A0</accession>
<accession>A5A8Q9</accession>
<accession>A5A8R0</accession>
<accession>O61843</accession>
<accession>Q6TM46</accession>
<proteinExistence type="evidence at protein level"/>
<gene>
    <name evidence="20" type="primary">unc-57</name>
    <name evidence="20" type="ORF">T04D1.3</name>
</gene>
<feature type="chain" id="PRO_0000438523" description="Endophilin-A homolog" evidence="12">
    <location>
        <begin position="1"/>
        <end position="381"/>
    </location>
</feature>
<feature type="domain" description="BAR" evidence="4">
    <location>
        <begin position="18"/>
        <end position="247"/>
    </location>
</feature>
<feature type="domain" description="SH3" evidence="3">
    <location>
        <begin position="320"/>
        <end position="379"/>
    </location>
</feature>
<feature type="region of interest" description="Membrane-binding amphipathic helix" evidence="1">
    <location>
        <begin position="1"/>
        <end position="21"/>
    </location>
</feature>
<feature type="region of interest" description="Disordered" evidence="5">
    <location>
        <begin position="246"/>
        <end position="323"/>
    </location>
</feature>
<feature type="coiled-coil region" evidence="2">
    <location>
        <begin position="170"/>
        <end position="238"/>
    </location>
</feature>
<feature type="compositionally biased region" description="Polar residues" evidence="5">
    <location>
        <begin position="260"/>
        <end position="271"/>
    </location>
</feature>
<feature type="compositionally biased region" description="Pro residues" evidence="5">
    <location>
        <begin position="305"/>
        <end position="317"/>
    </location>
</feature>
<feature type="splice variant" id="VSP_058673" description="In isoform b." evidence="12">
    <location>
        <begin position="1"/>
        <end position="277"/>
    </location>
</feature>
<feature type="splice variant" id="VSP_058674" description="In isoform a." evidence="12">
    <location>
        <begin position="269"/>
        <end position="270"/>
    </location>
</feature>
<feature type="splice variant" id="VSP_058675" description="In isoform a, isoform b and isoform c." evidence="12">
    <location>
        <begin position="288"/>
        <end position="289"/>
    </location>
</feature>
<feature type="mutagenesis site" description="Locomotion is almost completely impaired. Severe reduction in synaptic vesicle endocytosis and in the rate of excitatory postsynaptic currents (EPSCs) at neuromuscular junctions." evidence="9">
    <location>
        <begin position="1"/>
        <end position="26"/>
    </location>
</feature>
<feature type="mutagenesis site" description="May increase membrane-binding activity in vitro. Does not affect its localization to synaptic vesicles." evidence="9">
    <original>A</original>
    <variation>W</variation>
    <location>
        <position position="66"/>
    </location>
</feature>
<feature type="sequence conflict" description="In Ref. 1; AAQ96373." evidence="12" ref="1">
    <original>I</original>
    <variation>T</variation>
    <location>
        <position position="217"/>
    </location>
</feature>
<dbReference type="EMBL" id="AY394006">
    <property type="protein sequence ID" value="AAQ96373.1"/>
    <property type="molecule type" value="mRNA"/>
</dbReference>
<dbReference type="EMBL" id="BX284601">
    <property type="protein sequence ID" value="CCD61260.1"/>
    <property type="molecule type" value="Genomic_DNA"/>
</dbReference>
<dbReference type="EMBL" id="BX284601">
    <property type="protein sequence ID" value="CCD61261.1"/>
    <property type="molecule type" value="Genomic_DNA"/>
</dbReference>
<dbReference type="EMBL" id="BX284601">
    <property type="protein sequence ID" value="CCD61262.1"/>
    <property type="molecule type" value="Genomic_DNA"/>
</dbReference>
<dbReference type="EMBL" id="BX284601">
    <property type="protein sequence ID" value="CCD61263.1"/>
    <property type="molecule type" value="Genomic_DNA"/>
</dbReference>
<dbReference type="PIR" id="T33150">
    <property type="entry name" value="T33150"/>
</dbReference>
<dbReference type="RefSeq" id="NP_001040680.1">
    <molecule id="B1V8A0-2"/>
    <property type="nucleotide sequence ID" value="NM_001047215.5"/>
</dbReference>
<dbReference type="RefSeq" id="NP_001040681.1">
    <molecule id="B1V8A0-3"/>
    <property type="nucleotide sequence ID" value="NM_001047216.3"/>
</dbReference>
<dbReference type="RefSeq" id="NP_001122512.1">
    <molecule id="B1V8A0-4"/>
    <property type="nucleotide sequence ID" value="NM_001129040.5"/>
</dbReference>
<dbReference type="RefSeq" id="NP_001122513.1">
    <molecule id="B1V8A0-1"/>
    <property type="nucleotide sequence ID" value="NM_001129041.3"/>
</dbReference>
<dbReference type="SMR" id="B1V8A0"/>
<dbReference type="DIP" id="DIP-25104N"/>
<dbReference type="FunCoup" id="B1V8A0">
    <property type="interactions" value="1803"/>
</dbReference>
<dbReference type="IntAct" id="B1V8A0">
    <property type="interactions" value="45"/>
</dbReference>
<dbReference type="STRING" id="6239.T04D1.3d.1"/>
<dbReference type="PaxDb" id="6239-T04D1.3d"/>
<dbReference type="EnsemblMetazoa" id="T04D1.3a.1">
    <molecule id="B1V8A0-2"/>
    <property type="protein sequence ID" value="T04D1.3a.1"/>
    <property type="gene ID" value="WBGene00006791"/>
</dbReference>
<dbReference type="EnsemblMetazoa" id="T04D1.3b.1">
    <molecule id="B1V8A0-3"/>
    <property type="protein sequence ID" value="T04D1.3b.1"/>
    <property type="gene ID" value="WBGene00006791"/>
</dbReference>
<dbReference type="EnsemblMetazoa" id="T04D1.3c.1">
    <molecule id="B1V8A0-4"/>
    <property type="protein sequence ID" value="T04D1.3c.1"/>
    <property type="gene ID" value="WBGene00006791"/>
</dbReference>
<dbReference type="EnsemblMetazoa" id="T04D1.3d.1">
    <molecule id="B1V8A0-1"/>
    <property type="protein sequence ID" value="T04D1.3d.1"/>
    <property type="gene ID" value="WBGene00006791"/>
</dbReference>
<dbReference type="GeneID" id="172078"/>
<dbReference type="KEGG" id="cel:CELE_T04D1.3"/>
<dbReference type="UCSC" id="T04D1.3d">
    <property type="organism name" value="c. elegans"/>
</dbReference>
<dbReference type="AGR" id="WB:WBGene00006791"/>
<dbReference type="CTD" id="172078"/>
<dbReference type="WormBase" id="T04D1.3a">
    <molecule id="B1V8A0-2"/>
    <property type="protein sequence ID" value="CE37042"/>
    <property type="gene ID" value="WBGene00006791"/>
    <property type="gene designation" value="unc-57"/>
</dbReference>
<dbReference type="WormBase" id="T04D1.3b">
    <molecule id="B1V8A0-3"/>
    <property type="protein sequence ID" value="CE39765"/>
    <property type="gene ID" value="WBGene00006791"/>
    <property type="gene designation" value="unc-57"/>
</dbReference>
<dbReference type="WormBase" id="T04D1.3c">
    <molecule id="B1V8A0-4"/>
    <property type="protein sequence ID" value="CE41009"/>
    <property type="gene ID" value="WBGene00006791"/>
    <property type="gene designation" value="unc-57"/>
</dbReference>
<dbReference type="WormBase" id="T04D1.3d">
    <molecule id="B1V8A0-1"/>
    <property type="protein sequence ID" value="CE42509"/>
    <property type="gene ID" value="WBGene00006791"/>
    <property type="gene designation" value="unc-57"/>
</dbReference>
<dbReference type="eggNOG" id="KOG1118">
    <property type="taxonomic scope" value="Eukaryota"/>
</dbReference>
<dbReference type="GeneTree" id="ENSGT00940000157398"/>
<dbReference type="InParanoid" id="B1V8A0"/>
<dbReference type="OMA" id="IQPRREY"/>
<dbReference type="OrthoDB" id="443981at2759"/>
<dbReference type="PhylomeDB" id="B1V8A0"/>
<dbReference type="Reactome" id="R-CEL-182971">
    <property type="pathway name" value="EGFR downregulation"/>
</dbReference>
<dbReference type="Reactome" id="R-CEL-432720">
    <property type="pathway name" value="Lysosome Vesicle Biogenesis"/>
</dbReference>
<dbReference type="Reactome" id="R-CEL-432722">
    <property type="pathway name" value="Golgi Associated Vesicle Biogenesis"/>
</dbReference>
<dbReference type="Reactome" id="R-CEL-437239">
    <property type="pathway name" value="Recycling pathway of L1"/>
</dbReference>
<dbReference type="Reactome" id="R-CEL-6807004">
    <property type="pathway name" value="Negative regulation of MET activity"/>
</dbReference>
<dbReference type="Reactome" id="R-CEL-8856825">
    <property type="pathway name" value="Cargo recognition for clathrin-mediated endocytosis"/>
</dbReference>
<dbReference type="Reactome" id="R-CEL-8856828">
    <property type="pathway name" value="Clathrin-mediated endocytosis"/>
</dbReference>
<dbReference type="SignaLink" id="B1V8A0"/>
<dbReference type="PRO" id="PR:B1V8A0"/>
<dbReference type="Proteomes" id="UP000001940">
    <property type="component" value="Chromosome I"/>
</dbReference>
<dbReference type="Bgee" id="WBGene00006791">
    <property type="expression patterns" value="Expressed in larva and 4 other cell types or tissues"/>
</dbReference>
<dbReference type="GO" id="GO:0098978">
    <property type="term" value="C:glutamatergic synapse"/>
    <property type="evidence" value="ECO:0000318"/>
    <property type="project" value="GO_Central"/>
</dbReference>
<dbReference type="GO" id="GO:0016020">
    <property type="term" value="C:membrane"/>
    <property type="evidence" value="ECO:0007669"/>
    <property type="project" value="UniProtKB-SubCell"/>
</dbReference>
<dbReference type="GO" id="GO:0031594">
    <property type="term" value="C:neuromuscular junction"/>
    <property type="evidence" value="ECO:0000314"/>
    <property type="project" value="WormBase"/>
</dbReference>
<dbReference type="GO" id="GO:0098793">
    <property type="term" value="C:presynapse"/>
    <property type="evidence" value="ECO:0000318"/>
    <property type="project" value="GO_Central"/>
</dbReference>
<dbReference type="GO" id="GO:0008021">
    <property type="term" value="C:synaptic vesicle"/>
    <property type="evidence" value="ECO:0007669"/>
    <property type="project" value="UniProtKB-SubCell"/>
</dbReference>
<dbReference type="GO" id="GO:0072583">
    <property type="term" value="P:clathrin-dependent endocytosis"/>
    <property type="evidence" value="ECO:0000315"/>
    <property type="project" value="WormBase"/>
</dbReference>
<dbReference type="GO" id="GO:0070266">
    <property type="term" value="P:necroptotic process"/>
    <property type="evidence" value="ECO:0000316"/>
    <property type="project" value="WormBase"/>
</dbReference>
<dbReference type="CDD" id="cd07592">
    <property type="entry name" value="BAR_Endophilin_A"/>
    <property type="match status" value="1"/>
</dbReference>
<dbReference type="CDD" id="cd11803">
    <property type="entry name" value="SH3_Endophilin_A"/>
    <property type="match status" value="1"/>
</dbReference>
<dbReference type="FunFam" id="1.20.1270.60:FF:000124">
    <property type="entry name" value="Endophilin-A homolog"/>
    <property type="match status" value="1"/>
</dbReference>
<dbReference type="FunFam" id="2.30.30.40:FF:000072">
    <property type="entry name" value="Unconventional Myosin IB"/>
    <property type="match status" value="1"/>
</dbReference>
<dbReference type="Gene3D" id="1.20.1270.60">
    <property type="entry name" value="Arfaptin homology (AH) domain/BAR domain"/>
    <property type="match status" value="1"/>
</dbReference>
<dbReference type="Gene3D" id="2.30.30.40">
    <property type="entry name" value="SH3 Domains"/>
    <property type="match status" value="1"/>
</dbReference>
<dbReference type="InterPro" id="IPR027267">
    <property type="entry name" value="AH/BAR_dom_sf"/>
</dbReference>
<dbReference type="InterPro" id="IPR004148">
    <property type="entry name" value="BAR_dom"/>
</dbReference>
<dbReference type="InterPro" id="IPR035824">
    <property type="entry name" value="Endophilin_A_SH3"/>
</dbReference>
<dbReference type="InterPro" id="IPR050384">
    <property type="entry name" value="Endophilin_SH3RF"/>
</dbReference>
<dbReference type="InterPro" id="IPR036028">
    <property type="entry name" value="SH3-like_dom_sf"/>
</dbReference>
<dbReference type="InterPro" id="IPR001452">
    <property type="entry name" value="SH3_domain"/>
</dbReference>
<dbReference type="PANTHER" id="PTHR14167:SF81">
    <property type="entry name" value="ENDOPHILIN-A"/>
    <property type="match status" value="1"/>
</dbReference>
<dbReference type="PANTHER" id="PTHR14167">
    <property type="entry name" value="SH3 DOMAIN-CONTAINING"/>
    <property type="match status" value="1"/>
</dbReference>
<dbReference type="Pfam" id="PF03114">
    <property type="entry name" value="BAR"/>
    <property type="match status" value="1"/>
</dbReference>
<dbReference type="Pfam" id="PF07653">
    <property type="entry name" value="SH3_2"/>
    <property type="match status" value="1"/>
</dbReference>
<dbReference type="PRINTS" id="PR00452">
    <property type="entry name" value="SH3DOMAIN"/>
</dbReference>
<dbReference type="SMART" id="SM00721">
    <property type="entry name" value="BAR"/>
    <property type="match status" value="1"/>
</dbReference>
<dbReference type="SMART" id="SM00326">
    <property type="entry name" value="SH3"/>
    <property type="match status" value="1"/>
</dbReference>
<dbReference type="SUPFAM" id="SSF103657">
    <property type="entry name" value="BAR/IMD domain-like"/>
    <property type="match status" value="1"/>
</dbReference>
<dbReference type="SUPFAM" id="SSF50044">
    <property type="entry name" value="SH3-domain"/>
    <property type="match status" value="1"/>
</dbReference>
<dbReference type="PROSITE" id="PS51021">
    <property type="entry name" value="BAR"/>
    <property type="match status" value="1"/>
</dbReference>
<dbReference type="PROSITE" id="PS50002">
    <property type="entry name" value="SH3"/>
    <property type="match status" value="1"/>
</dbReference>